<evidence type="ECO:0000255" key="1">
    <source>
        <dbReference type="HAMAP-Rule" id="MF_00176"/>
    </source>
</evidence>
<name>SYS_RUEPO</name>
<keyword id="KW-0030">Aminoacyl-tRNA synthetase</keyword>
<keyword id="KW-0067">ATP-binding</keyword>
<keyword id="KW-0963">Cytoplasm</keyword>
<keyword id="KW-0436">Ligase</keyword>
<keyword id="KW-0547">Nucleotide-binding</keyword>
<keyword id="KW-0648">Protein biosynthesis</keyword>
<keyword id="KW-1185">Reference proteome</keyword>
<accession>Q5LR07</accession>
<protein>
    <recommendedName>
        <fullName evidence="1">Serine--tRNA ligase</fullName>
        <ecNumber evidence="1">6.1.1.11</ecNumber>
    </recommendedName>
    <alternativeName>
        <fullName evidence="1">Seryl-tRNA synthetase</fullName>
        <shortName evidence="1">SerRS</shortName>
    </alternativeName>
    <alternativeName>
        <fullName evidence="1">Seryl-tRNA(Ser/Sec) synthetase</fullName>
    </alternativeName>
</protein>
<dbReference type="EC" id="6.1.1.11" evidence="1"/>
<dbReference type="EMBL" id="CP000031">
    <property type="protein sequence ID" value="AAV95587.1"/>
    <property type="molecule type" value="Genomic_DNA"/>
</dbReference>
<dbReference type="RefSeq" id="WP_011048042.1">
    <property type="nucleotide sequence ID" value="NC_003911.12"/>
</dbReference>
<dbReference type="SMR" id="Q5LR07"/>
<dbReference type="STRING" id="246200.SPO2325"/>
<dbReference type="PaxDb" id="246200-SPO2325"/>
<dbReference type="KEGG" id="sil:SPO2325"/>
<dbReference type="eggNOG" id="COG0172">
    <property type="taxonomic scope" value="Bacteria"/>
</dbReference>
<dbReference type="HOGENOM" id="CLU_023797_1_1_5"/>
<dbReference type="OrthoDB" id="9804647at2"/>
<dbReference type="UniPathway" id="UPA00906">
    <property type="reaction ID" value="UER00895"/>
</dbReference>
<dbReference type="Proteomes" id="UP000001023">
    <property type="component" value="Chromosome"/>
</dbReference>
<dbReference type="GO" id="GO:0005737">
    <property type="term" value="C:cytoplasm"/>
    <property type="evidence" value="ECO:0007669"/>
    <property type="project" value="UniProtKB-SubCell"/>
</dbReference>
<dbReference type="GO" id="GO:0005524">
    <property type="term" value="F:ATP binding"/>
    <property type="evidence" value="ECO:0007669"/>
    <property type="project" value="UniProtKB-UniRule"/>
</dbReference>
<dbReference type="GO" id="GO:0004828">
    <property type="term" value="F:serine-tRNA ligase activity"/>
    <property type="evidence" value="ECO:0007669"/>
    <property type="project" value="UniProtKB-UniRule"/>
</dbReference>
<dbReference type="GO" id="GO:0016260">
    <property type="term" value="P:selenocysteine biosynthetic process"/>
    <property type="evidence" value="ECO:0007669"/>
    <property type="project" value="UniProtKB-UniRule"/>
</dbReference>
<dbReference type="GO" id="GO:0006434">
    <property type="term" value="P:seryl-tRNA aminoacylation"/>
    <property type="evidence" value="ECO:0007669"/>
    <property type="project" value="UniProtKB-UniRule"/>
</dbReference>
<dbReference type="CDD" id="cd00770">
    <property type="entry name" value="SerRS_core"/>
    <property type="match status" value="1"/>
</dbReference>
<dbReference type="Gene3D" id="3.30.930.10">
    <property type="entry name" value="Bira Bifunctional Protein, Domain 2"/>
    <property type="match status" value="1"/>
</dbReference>
<dbReference type="Gene3D" id="1.10.287.40">
    <property type="entry name" value="Serine-tRNA synthetase, tRNA binding domain"/>
    <property type="match status" value="1"/>
</dbReference>
<dbReference type="HAMAP" id="MF_00176">
    <property type="entry name" value="Ser_tRNA_synth_type1"/>
    <property type="match status" value="1"/>
</dbReference>
<dbReference type="InterPro" id="IPR002314">
    <property type="entry name" value="aa-tRNA-synt_IIb"/>
</dbReference>
<dbReference type="InterPro" id="IPR006195">
    <property type="entry name" value="aa-tRNA-synth_II"/>
</dbReference>
<dbReference type="InterPro" id="IPR045864">
    <property type="entry name" value="aa-tRNA-synth_II/BPL/LPL"/>
</dbReference>
<dbReference type="InterPro" id="IPR002317">
    <property type="entry name" value="Ser-tRNA-ligase_type_1"/>
</dbReference>
<dbReference type="InterPro" id="IPR015866">
    <property type="entry name" value="Ser-tRNA-synth_1_N"/>
</dbReference>
<dbReference type="InterPro" id="IPR042103">
    <property type="entry name" value="SerRS_1_N_sf"/>
</dbReference>
<dbReference type="InterPro" id="IPR033729">
    <property type="entry name" value="SerRS_core"/>
</dbReference>
<dbReference type="InterPro" id="IPR010978">
    <property type="entry name" value="tRNA-bd_arm"/>
</dbReference>
<dbReference type="NCBIfam" id="TIGR00414">
    <property type="entry name" value="serS"/>
    <property type="match status" value="1"/>
</dbReference>
<dbReference type="PANTHER" id="PTHR43697:SF1">
    <property type="entry name" value="SERINE--TRNA LIGASE"/>
    <property type="match status" value="1"/>
</dbReference>
<dbReference type="PANTHER" id="PTHR43697">
    <property type="entry name" value="SERYL-TRNA SYNTHETASE"/>
    <property type="match status" value="1"/>
</dbReference>
<dbReference type="Pfam" id="PF02403">
    <property type="entry name" value="Seryl_tRNA_N"/>
    <property type="match status" value="1"/>
</dbReference>
<dbReference type="Pfam" id="PF00587">
    <property type="entry name" value="tRNA-synt_2b"/>
    <property type="match status" value="1"/>
</dbReference>
<dbReference type="PIRSF" id="PIRSF001529">
    <property type="entry name" value="Ser-tRNA-synth_IIa"/>
    <property type="match status" value="1"/>
</dbReference>
<dbReference type="PRINTS" id="PR00981">
    <property type="entry name" value="TRNASYNTHSER"/>
</dbReference>
<dbReference type="SUPFAM" id="SSF55681">
    <property type="entry name" value="Class II aaRS and biotin synthetases"/>
    <property type="match status" value="1"/>
</dbReference>
<dbReference type="SUPFAM" id="SSF46589">
    <property type="entry name" value="tRNA-binding arm"/>
    <property type="match status" value="1"/>
</dbReference>
<dbReference type="PROSITE" id="PS50862">
    <property type="entry name" value="AA_TRNA_LIGASE_II"/>
    <property type="match status" value="1"/>
</dbReference>
<proteinExistence type="inferred from homology"/>
<feature type="chain" id="PRO_0000122117" description="Serine--tRNA ligase">
    <location>
        <begin position="1"/>
        <end position="430"/>
    </location>
</feature>
<feature type="binding site" evidence="1">
    <location>
        <begin position="231"/>
        <end position="233"/>
    </location>
    <ligand>
        <name>L-serine</name>
        <dbReference type="ChEBI" id="CHEBI:33384"/>
    </ligand>
</feature>
<feature type="binding site" evidence="1">
    <location>
        <begin position="262"/>
        <end position="264"/>
    </location>
    <ligand>
        <name>ATP</name>
        <dbReference type="ChEBI" id="CHEBI:30616"/>
    </ligand>
</feature>
<feature type="binding site" evidence="1">
    <location>
        <position position="285"/>
    </location>
    <ligand>
        <name>L-serine</name>
        <dbReference type="ChEBI" id="CHEBI:33384"/>
    </ligand>
</feature>
<feature type="binding site" evidence="1">
    <location>
        <begin position="349"/>
        <end position="352"/>
    </location>
    <ligand>
        <name>ATP</name>
        <dbReference type="ChEBI" id="CHEBI:30616"/>
    </ligand>
</feature>
<feature type="binding site" evidence="1">
    <location>
        <position position="385"/>
    </location>
    <ligand>
        <name>L-serine</name>
        <dbReference type="ChEBI" id="CHEBI:33384"/>
    </ligand>
</feature>
<gene>
    <name evidence="1" type="primary">serS</name>
    <name type="ordered locus">SPO2325</name>
</gene>
<organism>
    <name type="scientific">Ruegeria pomeroyi (strain ATCC 700808 / DSM 15171 / DSS-3)</name>
    <name type="common">Silicibacter pomeroyi</name>
    <dbReference type="NCBI Taxonomy" id="246200"/>
    <lineage>
        <taxon>Bacteria</taxon>
        <taxon>Pseudomonadati</taxon>
        <taxon>Pseudomonadota</taxon>
        <taxon>Alphaproteobacteria</taxon>
        <taxon>Rhodobacterales</taxon>
        <taxon>Roseobacteraceae</taxon>
        <taxon>Ruegeria</taxon>
    </lineage>
</organism>
<sequence>MHDIRAIRENPAAFDAALSRRGSAPVSSDILALDEARRGKILAAETAQADQNKASKEVGAAKARGDEAEFERLRALVAEKKAEIAAMQAEAKELDTQLSELLAGLPNLPAEDVPQGADEADNVELHRWGTPREMDFAPKEHFDLASVQDGMDFETAAKLSGARFVLLSGAVARIHRALAQFMLDTHSEQNGLTEVNGPVLVLSEMMYGTGQLPKFGEDSYQTREGWWLIPTSEVSLTNIVNGSTIAEDYLPRRYTAHSLCFRSEAGSAGKDTRGMLRQHQFEKVEMVSVTHPDHSDAEQKRMLRCAEGILEALGIPYRTIVLCTGDMGFGARRTYDIEAWLPGQNTYREISSVSTCGDFQARRMNARFKPADGGKPQFVHTLNGSGLAVGRCLIAVLENGQNADGSVTLPQALAPYLGGKLTLNTDGTLN</sequence>
<reference key="1">
    <citation type="journal article" date="2004" name="Nature">
        <title>Genome sequence of Silicibacter pomeroyi reveals adaptations to the marine environment.</title>
        <authorList>
            <person name="Moran M.A."/>
            <person name="Buchan A."/>
            <person name="Gonzalez J.M."/>
            <person name="Heidelberg J.F."/>
            <person name="Whitman W.B."/>
            <person name="Kiene R.P."/>
            <person name="Henriksen J.R."/>
            <person name="King G.M."/>
            <person name="Belas R."/>
            <person name="Fuqua C."/>
            <person name="Brinkac L.M."/>
            <person name="Lewis M."/>
            <person name="Johri S."/>
            <person name="Weaver B."/>
            <person name="Pai G."/>
            <person name="Eisen J.A."/>
            <person name="Rahe E."/>
            <person name="Sheldon W.M."/>
            <person name="Ye W."/>
            <person name="Miller T.R."/>
            <person name="Carlton J."/>
            <person name="Rasko D.A."/>
            <person name="Paulsen I.T."/>
            <person name="Ren Q."/>
            <person name="Daugherty S.C."/>
            <person name="DeBoy R.T."/>
            <person name="Dodson R.J."/>
            <person name="Durkin A.S."/>
            <person name="Madupu R."/>
            <person name="Nelson W.C."/>
            <person name="Sullivan S.A."/>
            <person name="Rosovitz M.J."/>
            <person name="Haft D.H."/>
            <person name="Selengut J."/>
            <person name="Ward N."/>
        </authorList>
    </citation>
    <scope>NUCLEOTIDE SEQUENCE [LARGE SCALE GENOMIC DNA]</scope>
    <source>
        <strain>ATCC 700808 / DSM 15171 / DSS-3</strain>
    </source>
</reference>
<reference key="2">
    <citation type="journal article" date="2014" name="Stand. Genomic Sci.">
        <title>An updated genome annotation for the model marine bacterium Ruegeria pomeroyi DSS-3.</title>
        <authorList>
            <person name="Rivers A.R."/>
            <person name="Smith C.B."/>
            <person name="Moran M.A."/>
        </authorList>
    </citation>
    <scope>GENOME REANNOTATION</scope>
    <source>
        <strain>ATCC 700808 / DSM 15171 / DSS-3</strain>
    </source>
</reference>
<comment type="function">
    <text evidence="1">Catalyzes the attachment of serine to tRNA(Ser). Is also able to aminoacylate tRNA(Sec) with serine, to form the misacylated tRNA L-seryl-tRNA(Sec), which will be further converted into selenocysteinyl-tRNA(Sec).</text>
</comment>
<comment type="catalytic activity">
    <reaction evidence="1">
        <text>tRNA(Ser) + L-serine + ATP = L-seryl-tRNA(Ser) + AMP + diphosphate + H(+)</text>
        <dbReference type="Rhea" id="RHEA:12292"/>
        <dbReference type="Rhea" id="RHEA-COMP:9669"/>
        <dbReference type="Rhea" id="RHEA-COMP:9703"/>
        <dbReference type="ChEBI" id="CHEBI:15378"/>
        <dbReference type="ChEBI" id="CHEBI:30616"/>
        <dbReference type="ChEBI" id="CHEBI:33019"/>
        <dbReference type="ChEBI" id="CHEBI:33384"/>
        <dbReference type="ChEBI" id="CHEBI:78442"/>
        <dbReference type="ChEBI" id="CHEBI:78533"/>
        <dbReference type="ChEBI" id="CHEBI:456215"/>
        <dbReference type="EC" id="6.1.1.11"/>
    </reaction>
</comment>
<comment type="catalytic activity">
    <reaction evidence="1">
        <text>tRNA(Sec) + L-serine + ATP = L-seryl-tRNA(Sec) + AMP + diphosphate + H(+)</text>
        <dbReference type="Rhea" id="RHEA:42580"/>
        <dbReference type="Rhea" id="RHEA-COMP:9742"/>
        <dbReference type="Rhea" id="RHEA-COMP:10128"/>
        <dbReference type="ChEBI" id="CHEBI:15378"/>
        <dbReference type="ChEBI" id="CHEBI:30616"/>
        <dbReference type="ChEBI" id="CHEBI:33019"/>
        <dbReference type="ChEBI" id="CHEBI:33384"/>
        <dbReference type="ChEBI" id="CHEBI:78442"/>
        <dbReference type="ChEBI" id="CHEBI:78533"/>
        <dbReference type="ChEBI" id="CHEBI:456215"/>
        <dbReference type="EC" id="6.1.1.11"/>
    </reaction>
</comment>
<comment type="pathway">
    <text evidence="1">Aminoacyl-tRNA biosynthesis; selenocysteinyl-tRNA(Sec) biosynthesis; L-seryl-tRNA(Sec) from L-serine and tRNA(Sec): step 1/1.</text>
</comment>
<comment type="subunit">
    <text evidence="1">Homodimer. The tRNA molecule binds across the dimer.</text>
</comment>
<comment type="subcellular location">
    <subcellularLocation>
        <location evidence="1">Cytoplasm</location>
    </subcellularLocation>
</comment>
<comment type="domain">
    <text evidence="1">Consists of two distinct domains, a catalytic core and a N-terminal extension that is involved in tRNA binding.</text>
</comment>
<comment type="similarity">
    <text evidence="1">Belongs to the class-II aminoacyl-tRNA synthetase family. Type-1 seryl-tRNA synthetase subfamily.</text>
</comment>